<protein>
    <recommendedName>
        <fullName evidence="1">Large ribosomal subunit protein uL23</fullName>
    </recommendedName>
    <alternativeName>
        <fullName evidence="2">50S ribosomal protein L23</fullName>
    </alternativeName>
</protein>
<name>RL23_MYCGA</name>
<evidence type="ECO:0000255" key="1">
    <source>
        <dbReference type="HAMAP-Rule" id="MF_01369"/>
    </source>
</evidence>
<evidence type="ECO:0000305" key="2"/>
<dbReference type="EMBL" id="AF036708">
    <property type="protein sequence ID" value="AAB95389.1"/>
    <property type="molecule type" value="Genomic_DNA"/>
</dbReference>
<dbReference type="EMBL" id="AE015450">
    <property type="protein sequence ID" value="AAP56403.2"/>
    <property type="molecule type" value="Genomic_DNA"/>
</dbReference>
<dbReference type="RefSeq" id="WP_011113282.1">
    <property type="nucleotide sequence ID" value="NC_004829.2"/>
</dbReference>
<dbReference type="SMR" id="O52334"/>
<dbReference type="KEGG" id="mga:MGA_0711"/>
<dbReference type="HOGENOM" id="CLU_037562_3_2_14"/>
<dbReference type="OrthoDB" id="9793353at2"/>
<dbReference type="Proteomes" id="UP000001418">
    <property type="component" value="Chromosome"/>
</dbReference>
<dbReference type="GO" id="GO:1990904">
    <property type="term" value="C:ribonucleoprotein complex"/>
    <property type="evidence" value="ECO:0007669"/>
    <property type="project" value="UniProtKB-KW"/>
</dbReference>
<dbReference type="GO" id="GO:0005840">
    <property type="term" value="C:ribosome"/>
    <property type="evidence" value="ECO:0007669"/>
    <property type="project" value="UniProtKB-KW"/>
</dbReference>
<dbReference type="GO" id="GO:0019843">
    <property type="term" value="F:rRNA binding"/>
    <property type="evidence" value="ECO:0007669"/>
    <property type="project" value="UniProtKB-UniRule"/>
</dbReference>
<dbReference type="GO" id="GO:0003735">
    <property type="term" value="F:structural constituent of ribosome"/>
    <property type="evidence" value="ECO:0007669"/>
    <property type="project" value="InterPro"/>
</dbReference>
<dbReference type="GO" id="GO:0006412">
    <property type="term" value="P:translation"/>
    <property type="evidence" value="ECO:0007669"/>
    <property type="project" value="UniProtKB-UniRule"/>
</dbReference>
<dbReference type="Gene3D" id="3.30.70.330">
    <property type="match status" value="1"/>
</dbReference>
<dbReference type="HAMAP" id="MF_01369_B">
    <property type="entry name" value="Ribosomal_uL23_B"/>
    <property type="match status" value="1"/>
</dbReference>
<dbReference type="InterPro" id="IPR012677">
    <property type="entry name" value="Nucleotide-bd_a/b_plait_sf"/>
</dbReference>
<dbReference type="InterPro" id="IPR013025">
    <property type="entry name" value="Ribosomal_uL23-like"/>
</dbReference>
<dbReference type="InterPro" id="IPR012678">
    <property type="entry name" value="Ribosomal_uL23/eL15/eS24_sf"/>
</dbReference>
<dbReference type="NCBIfam" id="NF004367">
    <property type="entry name" value="PRK05738.3-3"/>
    <property type="match status" value="1"/>
</dbReference>
<dbReference type="Pfam" id="PF00276">
    <property type="entry name" value="Ribosomal_L23"/>
    <property type="match status" value="1"/>
</dbReference>
<dbReference type="SUPFAM" id="SSF54189">
    <property type="entry name" value="Ribosomal proteins S24e, L23 and L15e"/>
    <property type="match status" value="1"/>
</dbReference>
<comment type="function">
    <text evidence="1">One of the early assembly proteins it binds 23S rRNA. One of the proteins that surrounds the polypeptide exit tunnel on the outside of the ribosome. Forms the main docking site for trigger factor binding to the ribosome.</text>
</comment>
<comment type="subunit">
    <text evidence="1">Part of the 50S ribosomal subunit. Contacts protein L29, and trigger factor when it is bound to the ribosome.</text>
</comment>
<comment type="similarity">
    <text evidence="1">Belongs to the universal ribosomal protein uL23 family.</text>
</comment>
<accession>O52334</accession>
<keyword id="KW-1185">Reference proteome</keyword>
<keyword id="KW-0687">Ribonucleoprotein</keyword>
<keyword id="KW-0689">Ribosomal protein</keyword>
<keyword id="KW-0694">RNA-binding</keyword>
<keyword id="KW-0699">rRNA-binding</keyword>
<sequence length="108" mass="12057">MQITDVLIKPILTEKTYGIMMSEPRKYTFLVNAKANKNYIKQAFKAIYGVTPIAVNTKIKKPARVRTGTQNPGYSRLEKIAIITVPFGVEVAITGEKPEPKEESSSKK</sequence>
<proteinExistence type="inferred from homology"/>
<gene>
    <name evidence="1" type="primary">rplW</name>
    <name evidence="1" type="synonym">rpl23</name>
    <name type="ordered locus">MYCGA0530</name>
    <name type="ORF">MGA_0711</name>
</gene>
<feature type="chain" id="PRO_0000129417" description="Large ribosomal subunit protein uL23">
    <location>
        <begin position="1"/>
        <end position="108"/>
    </location>
</feature>
<reference key="1">
    <citation type="journal article" date="2000" name="Mol. Biol. (Mosk.)">
        <title>Determination and analysis of the nucleotide sequence of a segment of a Mycoplasma gallisepticum strain A5969 chromosome, containing operons S10 and rrn23-5.</title>
        <authorList>
            <person name="Skamrov A.V."/>
            <person name="Gol'dman M.A."/>
            <person name="Feoktistova E.S."/>
            <person name="Bibilashvili R.S."/>
        </authorList>
    </citation>
    <scope>NUCLEOTIDE SEQUENCE [GENOMIC DNA]</scope>
    <source>
        <strain>A5969Var.B</strain>
    </source>
</reference>
<reference key="2">
    <citation type="journal article" date="2003" name="Microbiology">
        <title>The complete genome sequence of the avian pathogen Mycoplasma gallisepticum strain R(low).</title>
        <authorList>
            <person name="Papazisi L."/>
            <person name="Gorton T.S."/>
            <person name="Kutish G."/>
            <person name="Markham P.F."/>
            <person name="Browning G.F."/>
            <person name="Nguyen D.K."/>
            <person name="Swartzell S."/>
            <person name="Madan A."/>
            <person name="Mahairas G."/>
            <person name="Geary S.J."/>
        </authorList>
    </citation>
    <scope>NUCLEOTIDE SEQUENCE [LARGE SCALE GENOMIC DNA]</scope>
    <source>
        <strain>R(low / passage 15 / clone 2)</strain>
    </source>
</reference>
<organism>
    <name type="scientific">Mycoplasmoides gallisepticum (strain R(low / passage 15 / clone 2))</name>
    <name type="common">Mycoplasma gallisepticum</name>
    <dbReference type="NCBI Taxonomy" id="710127"/>
    <lineage>
        <taxon>Bacteria</taxon>
        <taxon>Bacillati</taxon>
        <taxon>Mycoplasmatota</taxon>
        <taxon>Mycoplasmoidales</taxon>
        <taxon>Mycoplasmoidaceae</taxon>
        <taxon>Mycoplasmoides</taxon>
    </lineage>
</organism>